<feature type="chain" id="PRO_1000085753" description="Glucosamine-6-phosphate deaminase">
    <location>
        <begin position="1"/>
        <end position="266"/>
    </location>
</feature>
<feature type="active site" description="Proton acceptor; for enolization step" evidence="1">
    <location>
        <position position="72"/>
    </location>
</feature>
<feature type="active site" description="For ring-opening step" evidence="1">
    <location>
        <position position="141"/>
    </location>
</feature>
<feature type="active site" description="Proton acceptor; for ring-opening step" evidence="1">
    <location>
        <position position="143"/>
    </location>
</feature>
<feature type="active site" description="For ring-opening step" evidence="1">
    <location>
        <position position="148"/>
    </location>
</feature>
<feature type="site" description="Part of the allosteric site" evidence="1">
    <location>
        <position position="151"/>
    </location>
</feature>
<feature type="site" description="Part of the allosteric site" evidence="1">
    <location>
        <position position="158"/>
    </location>
</feature>
<feature type="site" description="Part of the allosteric site" evidence="1">
    <location>
        <position position="160"/>
    </location>
</feature>
<feature type="site" description="Part of the allosteric site" evidence="1">
    <location>
        <position position="161"/>
    </location>
</feature>
<feature type="site" description="Part of the allosteric site" evidence="1">
    <location>
        <position position="254"/>
    </location>
</feature>
<name>NAGB_SALPB</name>
<protein>
    <recommendedName>
        <fullName evidence="1">Glucosamine-6-phosphate deaminase</fullName>
        <ecNumber evidence="1">3.5.99.6</ecNumber>
    </recommendedName>
    <alternativeName>
        <fullName evidence="1">GlcN6P deaminase</fullName>
        <shortName evidence="1">GNPDA</shortName>
    </alternativeName>
    <alternativeName>
        <fullName evidence="1">Glucosamine-6-phosphate isomerase</fullName>
    </alternativeName>
</protein>
<dbReference type="EC" id="3.5.99.6" evidence="1"/>
<dbReference type="EMBL" id="CP000886">
    <property type="protein sequence ID" value="ABX68231.1"/>
    <property type="molecule type" value="Genomic_DNA"/>
</dbReference>
<dbReference type="RefSeq" id="WP_001237059.1">
    <property type="nucleotide sequence ID" value="NC_010102.1"/>
</dbReference>
<dbReference type="SMR" id="A9MUG8"/>
<dbReference type="KEGG" id="spq:SPAB_02859"/>
<dbReference type="PATRIC" id="fig|1016998.12.peg.2704"/>
<dbReference type="HOGENOM" id="CLU_049611_0_1_6"/>
<dbReference type="BioCyc" id="SENT1016998:SPAB_RS11640-MONOMER"/>
<dbReference type="UniPathway" id="UPA00629">
    <property type="reaction ID" value="UER00684"/>
</dbReference>
<dbReference type="Proteomes" id="UP000008556">
    <property type="component" value="Chromosome"/>
</dbReference>
<dbReference type="GO" id="GO:0005737">
    <property type="term" value="C:cytoplasm"/>
    <property type="evidence" value="ECO:0007669"/>
    <property type="project" value="TreeGrafter"/>
</dbReference>
<dbReference type="GO" id="GO:0004342">
    <property type="term" value="F:glucosamine-6-phosphate deaminase activity"/>
    <property type="evidence" value="ECO:0007669"/>
    <property type="project" value="UniProtKB-UniRule"/>
</dbReference>
<dbReference type="GO" id="GO:0042802">
    <property type="term" value="F:identical protein binding"/>
    <property type="evidence" value="ECO:0007669"/>
    <property type="project" value="TreeGrafter"/>
</dbReference>
<dbReference type="GO" id="GO:0005975">
    <property type="term" value="P:carbohydrate metabolic process"/>
    <property type="evidence" value="ECO:0007669"/>
    <property type="project" value="InterPro"/>
</dbReference>
<dbReference type="GO" id="GO:0006043">
    <property type="term" value="P:glucosamine catabolic process"/>
    <property type="evidence" value="ECO:0007669"/>
    <property type="project" value="TreeGrafter"/>
</dbReference>
<dbReference type="GO" id="GO:0006046">
    <property type="term" value="P:N-acetylglucosamine catabolic process"/>
    <property type="evidence" value="ECO:0007669"/>
    <property type="project" value="TreeGrafter"/>
</dbReference>
<dbReference type="GO" id="GO:0019262">
    <property type="term" value="P:N-acetylneuraminate catabolic process"/>
    <property type="evidence" value="ECO:0007669"/>
    <property type="project" value="UniProtKB-UniRule"/>
</dbReference>
<dbReference type="CDD" id="cd01399">
    <property type="entry name" value="GlcN6P_deaminase"/>
    <property type="match status" value="1"/>
</dbReference>
<dbReference type="FunFam" id="3.40.50.1360:FF:000002">
    <property type="entry name" value="Glucosamine-6-phosphate deaminase"/>
    <property type="match status" value="1"/>
</dbReference>
<dbReference type="Gene3D" id="3.40.50.1360">
    <property type="match status" value="1"/>
</dbReference>
<dbReference type="HAMAP" id="MF_01241">
    <property type="entry name" value="GlcN6P_deamin"/>
    <property type="match status" value="1"/>
</dbReference>
<dbReference type="InterPro" id="IPR006148">
    <property type="entry name" value="Glc/Gal-6P_isomerase"/>
</dbReference>
<dbReference type="InterPro" id="IPR004547">
    <property type="entry name" value="Glucosamine6P_isomerase"/>
</dbReference>
<dbReference type="InterPro" id="IPR018321">
    <property type="entry name" value="Glucosamine6P_isomerase_CS"/>
</dbReference>
<dbReference type="InterPro" id="IPR037171">
    <property type="entry name" value="NagB/RpiA_transferase-like"/>
</dbReference>
<dbReference type="NCBIfam" id="TIGR00502">
    <property type="entry name" value="nagB"/>
    <property type="match status" value="1"/>
</dbReference>
<dbReference type="NCBIfam" id="NF001685">
    <property type="entry name" value="PRK00443.1-5"/>
    <property type="match status" value="1"/>
</dbReference>
<dbReference type="PANTHER" id="PTHR11280">
    <property type="entry name" value="GLUCOSAMINE-6-PHOSPHATE ISOMERASE"/>
    <property type="match status" value="1"/>
</dbReference>
<dbReference type="PANTHER" id="PTHR11280:SF5">
    <property type="entry name" value="GLUCOSAMINE-6-PHOSPHATE ISOMERASE"/>
    <property type="match status" value="1"/>
</dbReference>
<dbReference type="Pfam" id="PF01182">
    <property type="entry name" value="Glucosamine_iso"/>
    <property type="match status" value="1"/>
</dbReference>
<dbReference type="SUPFAM" id="SSF100950">
    <property type="entry name" value="NagB/RpiA/CoA transferase-like"/>
    <property type="match status" value="1"/>
</dbReference>
<dbReference type="PROSITE" id="PS01161">
    <property type="entry name" value="GLC_GALNAC_ISOMERASE"/>
    <property type="match status" value="1"/>
</dbReference>
<reference key="1">
    <citation type="submission" date="2007-11" db="EMBL/GenBank/DDBJ databases">
        <authorList>
            <consortium name="The Salmonella enterica serovar Paratyphi B Genome Sequencing Project"/>
            <person name="McClelland M."/>
            <person name="Sanderson E.K."/>
            <person name="Porwollik S."/>
            <person name="Spieth J."/>
            <person name="Clifton W.S."/>
            <person name="Fulton R."/>
            <person name="Cordes M."/>
            <person name="Wollam A."/>
            <person name="Shah N."/>
            <person name="Pepin K."/>
            <person name="Bhonagiri V."/>
            <person name="Nash W."/>
            <person name="Johnson M."/>
            <person name="Thiruvilangam P."/>
            <person name="Wilson R."/>
        </authorList>
    </citation>
    <scope>NUCLEOTIDE SEQUENCE [LARGE SCALE GENOMIC DNA]</scope>
    <source>
        <strain>ATCC BAA-1250 / SPB7</strain>
    </source>
</reference>
<comment type="function">
    <text evidence="1">Catalyzes the reversible isomerization-deamination of glucosamine 6-phosphate (GlcN6P) to form fructose 6-phosphate (Fru6P) and ammonium ion.</text>
</comment>
<comment type="catalytic activity">
    <reaction evidence="1">
        <text>alpha-D-glucosamine 6-phosphate + H2O = beta-D-fructose 6-phosphate + NH4(+)</text>
        <dbReference type="Rhea" id="RHEA:12172"/>
        <dbReference type="ChEBI" id="CHEBI:15377"/>
        <dbReference type="ChEBI" id="CHEBI:28938"/>
        <dbReference type="ChEBI" id="CHEBI:57634"/>
        <dbReference type="ChEBI" id="CHEBI:75989"/>
        <dbReference type="EC" id="3.5.99.6"/>
    </reaction>
</comment>
<comment type="activity regulation">
    <text evidence="1">Allosterically activated by N-acetylglucosamine 6-phosphate (GlcNAc6P).</text>
</comment>
<comment type="pathway">
    <text evidence="1">Amino-sugar metabolism; N-acetylneuraminate degradation; D-fructose 6-phosphate from N-acetylneuraminate: step 5/5.</text>
</comment>
<comment type="subunit">
    <text evidence="1">Homohexamer.</text>
</comment>
<comment type="similarity">
    <text evidence="1">Belongs to the glucosamine/galactosamine-6-phosphate isomerase family. NagB subfamily.</text>
</comment>
<keyword id="KW-0021">Allosteric enzyme</keyword>
<keyword id="KW-0119">Carbohydrate metabolism</keyword>
<keyword id="KW-0378">Hydrolase</keyword>
<sequence length="266" mass="29632">MRLIPLSTAEQVGKWAARHIVNRINAFKPTADRPFVLGLPTGGTPLTAYKALVEMHKAGEVSFKHVVTFNMDEYVGLPKEHPESYHSFMHRNFFDHVDIPAENINLLNGNAPDIDAECRQYEEKIRSYGKIHLFMGGVGNDGHIAFNEPASSLASRTRIKTLTHDTRVANSRFFDGDVNQVPKYALTVGVGTLLDAEEVMILVLGHQKAQALQAAVEGNVNHMWTISCLQLHPKAVVVCDEPSTMELKVKTLKYFNELEAENIKGL</sequence>
<evidence type="ECO:0000255" key="1">
    <source>
        <dbReference type="HAMAP-Rule" id="MF_01241"/>
    </source>
</evidence>
<organism>
    <name type="scientific">Salmonella paratyphi B (strain ATCC BAA-1250 / SPB7)</name>
    <dbReference type="NCBI Taxonomy" id="1016998"/>
    <lineage>
        <taxon>Bacteria</taxon>
        <taxon>Pseudomonadati</taxon>
        <taxon>Pseudomonadota</taxon>
        <taxon>Gammaproteobacteria</taxon>
        <taxon>Enterobacterales</taxon>
        <taxon>Enterobacteriaceae</taxon>
        <taxon>Salmonella</taxon>
    </lineage>
</organism>
<gene>
    <name evidence="1" type="primary">nagB</name>
    <name type="ordered locus">SPAB_02859</name>
</gene>
<accession>A9MUG8</accession>
<proteinExistence type="inferred from homology"/>